<name>RNSP3_BOARA</name>
<proteinExistence type="evidence at protein level"/>
<protein>
    <recommendedName>
        <fullName evidence="4">Raniseptin-3</fullName>
        <shortName evidence="4">Rsp-3</shortName>
    </recommendedName>
</protein>
<dbReference type="GO" id="GO:0005576">
    <property type="term" value="C:extracellular region"/>
    <property type="evidence" value="ECO:0007669"/>
    <property type="project" value="UniProtKB-SubCell"/>
</dbReference>
<dbReference type="GO" id="GO:0042742">
    <property type="term" value="P:defense response to bacterium"/>
    <property type="evidence" value="ECO:0007669"/>
    <property type="project" value="UniProtKB-KW"/>
</dbReference>
<dbReference type="InterPro" id="IPR004275">
    <property type="entry name" value="Frog_antimicrobial_propeptide"/>
</dbReference>
<dbReference type="InterPro" id="IPR016322">
    <property type="entry name" value="FSAP"/>
</dbReference>
<dbReference type="Pfam" id="PF03032">
    <property type="entry name" value="FSAP_sig_propep"/>
    <property type="match status" value="1"/>
</dbReference>
<dbReference type="PIRSF" id="PIRSF001822">
    <property type="entry name" value="Dermaseptin_precursor"/>
    <property type="match status" value="1"/>
</dbReference>
<organism>
    <name type="scientific">Boana raniceps</name>
    <name type="common">Chaco tree frog</name>
    <name type="synonym">Hyla roeschmanni</name>
    <dbReference type="NCBI Taxonomy" id="192750"/>
    <lineage>
        <taxon>Eukaryota</taxon>
        <taxon>Metazoa</taxon>
        <taxon>Chordata</taxon>
        <taxon>Craniata</taxon>
        <taxon>Vertebrata</taxon>
        <taxon>Euteleostomi</taxon>
        <taxon>Amphibia</taxon>
        <taxon>Batrachia</taxon>
        <taxon>Anura</taxon>
        <taxon>Neobatrachia</taxon>
        <taxon>Hyloidea</taxon>
        <taxon>Hylidae</taxon>
        <taxon>Hylinae</taxon>
        <taxon>Cophomantini</taxon>
        <taxon>Boana</taxon>
    </lineage>
</organism>
<accession>P86038</accession>
<comment type="function">
    <text evidence="1">Has antibacterial activity.</text>
</comment>
<comment type="subcellular location">
    <subcellularLocation>
        <location evidence="3">Secreted</location>
    </subcellularLocation>
</comment>
<comment type="tissue specificity">
    <text evidence="3">Expressed by the skin glands.</text>
</comment>
<comment type="similarity">
    <text evidence="2">Belongs to the frog skin active peptide (FSAP) family. Dermaseptin subfamily.</text>
</comment>
<sequence length="79" mass="9074">MAFLKKSLFLVLFLGIVSLSICEEEKREGEEEEKQEEENEELSEEELRERRAWLDKLKSIGKVVGKVAIGVAKNLLNPQ</sequence>
<keyword id="KW-0878">Amphibian defense peptide</keyword>
<keyword id="KW-0044">Antibiotic</keyword>
<keyword id="KW-0929">Antimicrobial</keyword>
<keyword id="KW-0165">Cleavage on pair of basic residues</keyword>
<keyword id="KW-0903">Direct protein sequencing</keyword>
<keyword id="KW-0964">Secreted</keyword>
<keyword id="KW-0732">Signal</keyword>
<feature type="signal peptide" evidence="2">
    <location>
        <begin position="1"/>
        <end position="22"/>
    </location>
</feature>
<feature type="propeptide" id="PRO_0000371441" evidence="3">
    <location>
        <begin position="23"/>
        <end position="49"/>
    </location>
</feature>
<feature type="peptide" id="PRO_0000371442" description="Raniseptin-3" evidence="3">
    <location>
        <begin position="52"/>
        <end position="79"/>
    </location>
</feature>
<reference evidence="5" key="1">
    <citation type="journal article" date="2008" name="Biochem. Biophys. Res. Commun.">
        <title>Post-secretory events alter the peptide content of the skin secretion of Hypsiboas raniceps.</title>
        <authorList>
            <person name="Magalhaes B.S."/>
            <person name="Melo J.A.T."/>
            <person name="Leite J.R.S.A."/>
            <person name="Silva L.P."/>
            <person name="Prates M.V."/>
            <person name="Vinecky F."/>
            <person name="Barbosa E.A."/>
            <person name="Verly R.M."/>
            <person name="Mehta A."/>
            <person name="Nicoli J.R."/>
            <person name="Bemquerer M.P."/>
            <person name="Andrade A.C."/>
            <person name="Bloch C. Jr."/>
        </authorList>
    </citation>
    <scope>NUCLEOTIDE SEQUENCE [MRNA]</scope>
    <scope>PROTEIN SEQUENCE OF 52-79</scope>
    <scope>SUBCELLULAR LOCATION</scope>
    <scope>TISSUE SPECIFICITY</scope>
    <source>
        <tissue evidence="3">Skin</tissue>
        <tissue evidence="3">Skin secretion</tissue>
    </source>
</reference>
<evidence type="ECO:0000250" key="1">
    <source>
        <dbReference type="UniProtKB" id="P86037"/>
    </source>
</evidence>
<evidence type="ECO:0000255" key="2"/>
<evidence type="ECO:0000269" key="3">
    <source>
    </source>
</evidence>
<evidence type="ECO:0000303" key="4">
    <source>
    </source>
</evidence>
<evidence type="ECO:0000305" key="5"/>